<sequence>MHEKLTTRFAPSPTGYLHIGGLRTALYNYLYARKNGGNFLLRIEDTDLKRNSKEATKAIIEAFKWCGLEHDGEVTYQSERFDLYKEYVKKLLDEGKAYYCYMSKEELEELRAKQEAAKERPRYDGRYREFTGTPPQGIEPVVRIKAPQSGEIVFEDGVKGEVRFKAEDIMDDFIIARSDGTPTYNFTVVIDDALMGVSDVIRGDDHLSNTPKQIVLYEALGFKIPKFFHVAMIHGEDGKKLSKRHGATDVMEYKEMGILPQALLNFLVRLGWSHGDDEVFSLEDLKKLFDPYHINKSASCYNAKKLEWLNAHYIKTLPFEEINRQLKDLGFDLSVYEKAGFLLDLLRERAKTLHDIINGAKSIVNAPQNYDENAVQKFVNENNLELLQAFANTLKDQKTGKDFEDFTNDFLEKKEAKLKDLAQPIRIALTGSAVSPSIFEVLEFLGVDECKKRIDNFLKVRGK</sequence>
<name>SYE2_CAMJ8</name>
<proteinExistence type="inferred from homology"/>
<reference key="1">
    <citation type="journal article" date="2007" name="J. Bacteriol.">
        <title>The complete genome sequence of Campylobacter jejuni strain 81116 (NCTC11828).</title>
        <authorList>
            <person name="Pearson B.M."/>
            <person name="Gaskin D.J.H."/>
            <person name="Segers R.P.A.M."/>
            <person name="Wells J.M."/>
            <person name="Nuijten P.J.M."/>
            <person name="van Vliet A.H.M."/>
        </authorList>
    </citation>
    <scope>NUCLEOTIDE SEQUENCE [LARGE SCALE GENOMIC DNA]</scope>
    <source>
        <strain>81116 / NCTC 11828</strain>
    </source>
</reference>
<gene>
    <name evidence="1" type="primary">gltX2</name>
    <name type="ordered locus">C8J_1231</name>
</gene>
<protein>
    <recommendedName>
        <fullName evidence="1">Glutamate--tRNA ligase 2</fullName>
        <ecNumber evidence="1">6.1.1.17</ecNumber>
    </recommendedName>
    <alternativeName>
        <fullName evidence="1">Glutamyl-tRNA synthetase 2</fullName>
        <shortName evidence="1">GluRS 2</shortName>
    </alternativeName>
</protein>
<keyword id="KW-0030">Aminoacyl-tRNA synthetase</keyword>
<keyword id="KW-0067">ATP-binding</keyword>
<keyword id="KW-0963">Cytoplasm</keyword>
<keyword id="KW-0436">Ligase</keyword>
<keyword id="KW-0547">Nucleotide-binding</keyword>
<keyword id="KW-0648">Protein biosynthesis</keyword>
<dbReference type="EC" id="6.1.1.17" evidence="1"/>
<dbReference type="EMBL" id="CP000814">
    <property type="protein sequence ID" value="ABV52830.1"/>
    <property type="molecule type" value="Genomic_DNA"/>
</dbReference>
<dbReference type="SMR" id="A8FMZ3"/>
<dbReference type="KEGG" id="cju:C8J_1231"/>
<dbReference type="HOGENOM" id="CLU_015768_6_0_7"/>
<dbReference type="GO" id="GO:0005829">
    <property type="term" value="C:cytosol"/>
    <property type="evidence" value="ECO:0007669"/>
    <property type="project" value="TreeGrafter"/>
</dbReference>
<dbReference type="GO" id="GO:0005524">
    <property type="term" value="F:ATP binding"/>
    <property type="evidence" value="ECO:0007669"/>
    <property type="project" value="UniProtKB-UniRule"/>
</dbReference>
<dbReference type="GO" id="GO:0004818">
    <property type="term" value="F:glutamate-tRNA ligase activity"/>
    <property type="evidence" value="ECO:0007669"/>
    <property type="project" value="UniProtKB-UniRule"/>
</dbReference>
<dbReference type="GO" id="GO:0000049">
    <property type="term" value="F:tRNA binding"/>
    <property type="evidence" value="ECO:0007669"/>
    <property type="project" value="InterPro"/>
</dbReference>
<dbReference type="GO" id="GO:0008270">
    <property type="term" value="F:zinc ion binding"/>
    <property type="evidence" value="ECO:0007669"/>
    <property type="project" value="InterPro"/>
</dbReference>
<dbReference type="GO" id="GO:0006424">
    <property type="term" value="P:glutamyl-tRNA aminoacylation"/>
    <property type="evidence" value="ECO:0007669"/>
    <property type="project" value="UniProtKB-UniRule"/>
</dbReference>
<dbReference type="CDD" id="cd00808">
    <property type="entry name" value="GluRS_core"/>
    <property type="match status" value="1"/>
</dbReference>
<dbReference type="FunFam" id="3.40.50.620:FF:000007">
    <property type="entry name" value="Glutamate--tRNA ligase"/>
    <property type="match status" value="1"/>
</dbReference>
<dbReference type="Gene3D" id="1.10.10.350">
    <property type="match status" value="1"/>
</dbReference>
<dbReference type="Gene3D" id="3.40.50.620">
    <property type="entry name" value="HUPs"/>
    <property type="match status" value="1"/>
</dbReference>
<dbReference type="HAMAP" id="MF_00022">
    <property type="entry name" value="Glu_tRNA_synth_type1"/>
    <property type="match status" value="1"/>
</dbReference>
<dbReference type="InterPro" id="IPR045462">
    <property type="entry name" value="aa-tRNA-synth_I_cd-bd"/>
</dbReference>
<dbReference type="InterPro" id="IPR020751">
    <property type="entry name" value="aa-tRNA-synth_I_codon-bd_sub2"/>
</dbReference>
<dbReference type="InterPro" id="IPR001412">
    <property type="entry name" value="aa-tRNA-synth_I_CS"/>
</dbReference>
<dbReference type="InterPro" id="IPR008925">
    <property type="entry name" value="aa_tRNA-synth_I_cd-bd_sf"/>
</dbReference>
<dbReference type="InterPro" id="IPR004527">
    <property type="entry name" value="Glu-tRNA-ligase_bac/mito"/>
</dbReference>
<dbReference type="InterPro" id="IPR000924">
    <property type="entry name" value="Glu/Gln-tRNA-synth"/>
</dbReference>
<dbReference type="InterPro" id="IPR020058">
    <property type="entry name" value="Glu/Gln-tRNA-synth_Ib_cat-dom"/>
</dbReference>
<dbReference type="InterPro" id="IPR049940">
    <property type="entry name" value="GluQ/Sye"/>
</dbReference>
<dbReference type="InterPro" id="IPR033910">
    <property type="entry name" value="GluRS_core"/>
</dbReference>
<dbReference type="InterPro" id="IPR014729">
    <property type="entry name" value="Rossmann-like_a/b/a_fold"/>
</dbReference>
<dbReference type="NCBIfam" id="TIGR00464">
    <property type="entry name" value="gltX_bact"/>
    <property type="match status" value="1"/>
</dbReference>
<dbReference type="PANTHER" id="PTHR43311">
    <property type="entry name" value="GLUTAMATE--TRNA LIGASE"/>
    <property type="match status" value="1"/>
</dbReference>
<dbReference type="PANTHER" id="PTHR43311:SF2">
    <property type="entry name" value="GLUTAMATE--TRNA LIGASE, MITOCHONDRIAL-RELATED"/>
    <property type="match status" value="1"/>
</dbReference>
<dbReference type="Pfam" id="PF19269">
    <property type="entry name" value="Anticodon_2"/>
    <property type="match status" value="1"/>
</dbReference>
<dbReference type="Pfam" id="PF00749">
    <property type="entry name" value="tRNA-synt_1c"/>
    <property type="match status" value="1"/>
</dbReference>
<dbReference type="PRINTS" id="PR00987">
    <property type="entry name" value="TRNASYNTHGLU"/>
</dbReference>
<dbReference type="SUPFAM" id="SSF48163">
    <property type="entry name" value="An anticodon-binding domain of class I aminoacyl-tRNA synthetases"/>
    <property type="match status" value="1"/>
</dbReference>
<dbReference type="SUPFAM" id="SSF52374">
    <property type="entry name" value="Nucleotidylyl transferase"/>
    <property type="match status" value="1"/>
</dbReference>
<dbReference type="PROSITE" id="PS00178">
    <property type="entry name" value="AA_TRNA_LIGASE_I"/>
    <property type="match status" value="1"/>
</dbReference>
<feature type="chain" id="PRO_0000367643" description="Glutamate--tRNA ligase 2">
    <location>
        <begin position="1"/>
        <end position="463"/>
    </location>
</feature>
<feature type="short sequence motif" description="'HIGH' region" evidence="1">
    <location>
        <begin position="11"/>
        <end position="21"/>
    </location>
</feature>
<feature type="short sequence motif" description="'KMSKS' region" evidence="1">
    <location>
        <begin position="240"/>
        <end position="244"/>
    </location>
</feature>
<feature type="binding site" evidence="1">
    <location>
        <position position="243"/>
    </location>
    <ligand>
        <name>ATP</name>
        <dbReference type="ChEBI" id="CHEBI:30616"/>
    </ligand>
</feature>
<organism>
    <name type="scientific">Campylobacter jejuni subsp. jejuni serotype O:6 (strain 81116 / NCTC 11828)</name>
    <dbReference type="NCBI Taxonomy" id="407148"/>
    <lineage>
        <taxon>Bacteria</taxon>
        <taxon>Pseudomonadati</taxon>
        <taxon>Campylobacterota</taxon>
        <taxon>Epsilonproteobacteria</taxon>
        <taxon>Campylobacterales</taxon>
        <taxon>Campylobacteraceae</taxon>
        <taxon>Campylobacter</taxon>
    </lineage>
</organism>
<evidence type="ECO:0000255" key="1">
    <source>
        <dbReference type="HAMAP-Rule" id="MF_00022"/>
    </source>
</evidence>
<accession>A8FMZ3</accession>
<comment type="function">
    <text evidence="1">Catalyzes the attachment of glutamate to tRNA(Glu) in a two-step reaction: glutamate is first activated by ATP to form Glu-AMP and then transferred to the acceptor end of tRNA(Glu).</text>
</comment>
<comment type="catalytic activity">
    <reaction evidence="1">
        <text>tRNA(Glu) + L-glutamate + ATP = L-glutamyl-tRNA(Glu) + AMP + diphosphate</text>
        <dbReference type="Rhea" id="RHEA:23540"/>
        <dbReference type="Rhea" id="RHEA-COMP:9663"/>
        <dbReference type="Rhea" id="RHEA-COMP:9680"/>
        <dbReference type="ChEBI" id="CHEBI:29985"/>
        <dbReference type="ChEBI" id="CHEBI:30616"/>
        <dbReference type="ChEBI" id="CHEBI:33019"/>
        <dbReference type="ChEBI" id="CHEBI:78442"/>
        <dbReference type="ChEBI" id="CHEBI:78520"/>
        <dbReference type="ChEBI" id="CHEBI:456215"/>
        <dbReference type="EC" id="6.1.1.17"/>
    </reaction>
</comment>
<comment type="subunit">
    <text evidence="1">Monomer.</text>
</comment>
<comment type="subcellular location">
    <subcellularLocation>
        <location evidence="1">Cytoplasm</location>
    </subcellularLocation>
</comment>
<comment type="similarity">
    <text evidence="1">Belongs to the class-I aminoacyl-tRNA synthetase family. Glutamate--tRNA ligase type 1 subfamily.</text>
</comment>